<dbReference type="EMBL" id="AB169770">
    <property type="protein sequence ID" value="BAE01851.1"/>
    <property type="molecule type" value="mRNA"/>
</dbReference>
<dbReference type="RefSeq" id="XP_045255576.1">
    <property type="nucleotide sequence ID" value="XM_045399641.2"/>
</dbReference>
<dbReference type="SMR" id="Q4R4X4"/>
<dbReference type="STRING" id="9541.ENSMFAP00000033751"/>
<dbReference type="GlyCosmos" id="Q4R4X4">
    <property type="glycosylation" value="3 sites, No reported glycans"/>
</dbReference>
<dbReference type="Ensembl" id="ENSMFAT00000007979.2">
    <property type="protein sequence ID" value="ENSMFAP00000033751.1"/>
    <property type="gene ID" value="ENSMFAG00000003332.2"/>
</dbReference>
<dbReference type="GeneID" id="101864871"/>
<dbReference type="VEuPathDB" id="HostDB:ENSMFAG00000003332"/>
<dbReference type="eggNOG" id="KOG0977">
    <property type="taxonomic scope" value="Eukaryota"/>
</dbReference>
<dbReference type="GeneTree" id="ENSGT00940000156146"/>
<dbReference type="OMA" id="GGMYATK"/>
<dbReference type="Proteomes" id="UP000233100">
    <property type="component" value="Chromosome 9"/>
</dbReference>
<dbReference type="Bgee" id="ENSMFAG00000003332">
    <property type="expression patterns" value="Expressed in bone marrow and 13 other cell types or tissues"/>
</dbReference>
<dbReference type="GO" id="GO:0030424">
    <property type="term" value="C:axon"/>
    <property type="evidence" value="ECO:0007669"/>
    <property type="project" value="TreeGrafter"/>
</dbReference>
<dbReference type="GO" id="GO:0031252">
    <property type="term" value="C:cell leading edge"/>
    <property type="evidence" value="ECO:0007669"/>
    <property type="project" value="Ensembl"/>
</dbReference>
<dbReference type="GO" id="GO:0005737">
    <property type="term" value="C:cytoplasm"/>
    <property type="evidence" value="ECO:0000250"/>
    <property type="project" value="UniProtKB"/>
</dbReference>
<dbReference type="GO" id="GO:0005829">
    <property type="term" value="C:cytosol"/>
    <property type="evidence" value="ECO:0007669"/>
    <property type="project" value="Ensembl"/>
</dbReference>
<dbReference type="GO" id="GO:0005882">
    <property type="term" value="C:intermediate filament"/>
    <property type="evidence" value="ECO:0000250"/>
    <property type="project" value="UniProtKB"/>
</dbReference>
<dbReference type="GO" id="GO:0016363">
    <property type="term" value="C:nuclear matrix"/>
    <property type="evidence" value="ECO:0007669"/>
    <property type="project" value="UniProtKB-SubCell"/>
</dbReference>
<dbReference type="GO" id="GO:0005777">
    <property type="term" value="C:peroxisome"/>
    <property type="evidence" value="ECO:0007669"/>
    <property type="project" value="Ensembl"/>
</dbReference>
<dbReference type="GO" id="GO:0045335">
    <property type="term" value="C:phagocytic vesicle"/>
    <property type="evidence" value="ECO:0007669"/>
    <property type="project" value="Ensembl"/>
</dbReference>
<dbReference type="GO" id="GO:0005886">
    <property type="term" value="C:plasma membrane"/>
    <property type="evidence" value="ECO:0000250"/>
    <property type="project" value="UniProtKB"/>
</dbReference>
<dbReference type="GO" id="GO:0003725">
    <property type="term" value="F:double-stranded RNA binding"/>
    <property type="evidence" value="ECO:0007669"/>
    <property type="project" value="Ensembl"/>
</dbReference>
<dbReference type="GO" id="GO:0042802">
    <property type="term" value="F:identical protein binding"/>
    <property type="evidence" value="ECO:0007669"/>
    <property type="project" value="Ensembl"/>
</dbReference>
<dbReference type="GO" id="GO:1990254">
    <property type="term" value="F:keratin filament binding"/>
    <property type="evidence" value="ECO:0007669"/>
    <property type="project" value="Ensembl"/>
</dbReference>
<dbReference type="GO" id="GO:0019904">
    <property type="term" value="F:protein domain specific binding"/>
    <property type="evidence" value="ECO:0007669"/>
    <property type="project" value="Ensembl"/>
</dbReference>
<dbReference type="GO" id="GO:0097110">
    <property type="term" value="F:scaffold protein binding"/>
    <property type="evidence" value="ECO:0007669"/>
    <property type="project" value="Ensembl"/>
</dbReference>
<dbReference type="GO" id="GO:0005200">
    <property type="term" value="F:structural constituent of cytoskeleton"/>
    <property type="evidence" value="ECO:0007669"/>
    <property type="project" value="Ensembl"/>
</dbReference>
<dbReference type="GO" id="GO:0005212">
    <property type="term" value="F:structural constituent of eye lens"/>
    <property type="evidence" value="ECO:0007669"/>
    <property type="project" value="Ensembl"/>
</dbReference>
<dbReference type="GO" id="GO:0014002">
    <property type="term" value="P:astrocyte development"/>
    <property type="evidence" value="ECO:0007669"/>
    <property type="project" value="Ensembl"/>
</dbReference>
<dbReference type="GO" id="GO:0060020">
    <property type="term" value="P:Bergmann glial cell differentiation"/>
    <property type="evidence" value="ECO:0007669"/>
    <property type="project" value="Ensembl"/>
</dbReference>
<dbReference type="GO" id="GO:0071222">
    <property type="term" value="P:cellular response to lipopolysaccharide"/>
    <property type="evidence" value="ECO:0000250"/>
    <property type="project" value="UniProtKB"/>
</dbReference>
<dbReference type="GO" id="GO:0071225">
    <property type="term" value="P:cellular response to muramyl dipeptide"/>
    <property type="evidence" value="ECO:0000250"/>
    <property type="project" value="UniProtKB"/>
</dbReference>
<dbReference type="GO" id="GO:0071346">
    <property type="term" value="P:cellular response to type II interferon"/>
    <property type="evidence" value="ECO:0007669"/>
    <property type="project" value="Ensembl"/>
</dbReference>
<dbReference type="GO" id="GO:0045109">
    <property type="term" value="P:intermediate filament organization"/>
    <property type="evidence" value="ECO:0000250"/>
    <property type="project" value="UniProtKB"/>
</dbReference>
<dbReference type="GO" id="GO:0070307">
    <property type="term" value="P:lens fiber cell development"/>
    <property type="evidence" value="ECO:0007669"/>
    <property type="project" value="Ensembl"/>
</dbReference>
<dbReference type="GO" id="GO:0010977">
    <property type="term" value="P:negative regulation of neuron projection development"/>
    <property type="evidence" value="ECO:0007669"/>
    <property type="project" value="Ensembl"/>
</dbReference>
<dbReference type="GO" id="GO:0031175">
    <property type="term" value="P:neuron projection development"/>
    <property type="evidence" value="ECO:0007669"/>
    <property type="project" value="Ensembl"/>
</dbReference>
<dbReference type="GO" id="GO:0032967">
    <property type="term" value="P:positive regulation of collagen biosynthetic process"/>
    <property type="evidence" value="ECO:0007669"/>
    <property type="project" value="Ensembl"/>
</dbReference>
<dbReference type="GO" id="GO:0010634">
    <property type="term" value="P:positive regulation of epithelial cell migration"/>
    <property type="evidence" value="ECO:0000250"/>
    <property type="project" value="UniProtKB"/>
</dbReference>
<dbReference type="GO" id="GO:0010628">
    <property type="term" value="P:positive regulation of gene expression"/>
    <property type="evidence" value="ECO:0007669"/>
    <property type="project" value="Ensembl"/>
</dbReference>
<dbReference type="GO" id="GO:0043488">
    <property type="term" value="P:regulation of mRNA stability"/>
    <property type="evidence" value="ECO:0007669"/>
    <property type="project" value="Ensembl"/>
</dbReference>
<dbReference type="FunFam" id="1.20.5.1160:FF:000001">
    <property type="entry name" value="Keratin type II"/>
    <property type="match status" value="1"/>
</dbReference>
<dbReference type="FunFam" id="1.20.5.170:FF:000002">
    <property type="entry name" value="Type I keratin KA11"/>
    <property type="match status" value="1"/>
</dbReference>
<dbReference type="FunFam" id="1.20.5.500:FF:000001">
    <property type="entry name" value="Type II keratin 23"/>
    <property type="match status" value="1"/>
</dbReference>
<dbReference type="Gene3D" id="1.20.5.170">
    <property type="match status" value="1"/>
</dbReference>
<dbReference type="Gene3D" id="1.20.5.500">
    <property type="entry name" value="Single helix bin"/>
    <property type="match status" value="1"/>
</dbReference>
<dbReference type="Gene3D" id="1.20.5.1160">
    <property type="entry name" value="Vasodilator-stimulated phosphoprotein"/>
    <property type="match status" value="1"/>
</dbReference>
<dbReference type="InterPro" id="IPR018039">
    <property type="entry name" value="IF_conserved"/>
</dbReference>
<dbReference type="InterPro" id="IPR039008">
    <property type="entry name" value="IF_rod_dom"/>
</dbReference>
<dbReference type="InterPro" id="IPR006821">
    <property type="entry name" value="Intermed_filament_DNA-bd"/>
</dbReference>
<dbReference type="InterPro" id="IPR050405">
    <property type="entry name" value="Intermediate_filament"/>
</dbReference>
<dbReference type="PANTHER" id="PTHR45652">
    <property type="entry name" value="GLIAL FIBRILLARY ACIDIC PROTEIN"/>
    <property type="match status" value="1"/>
</dbReference>
<dbReference type="PANTHER" id="PTHR45652:SF5">
    <property type="entry name" value="VIMENTIN"/>
    <property type="match status" value="1"/>
</dbReference>
<dbReference type="Pfam" id="PF00038">
    <property type="entry name" value="Filament"/>
    <property type="match status" value="1"/>
</dbReference>
<dbReference type="Pfam" id="PF04732">
    <property type="entry name" value="Filament_head"/>
    <property type="match status" value="1"/>
</dbReference>
<dbReference type="SMART" id="SM01391">
    <property type="entry name" value="Filament"/>
    <property type="match status" value="1"/>
</dbReference>
<dbReference type="SUPFAM" id="SSF64593">
    <property type="entry name" value="Intermediate filament protein, coiled coil region"/>
    <property type="match status" value="2"/>
</dbReference>
<dbReference type="PROSITE" id="PS00226">
    <property type="entry name" value="IF_ROD_1"/>
    <property type="match status" value="1"/>
</dbReference>
<dbReference type="PROSITE" id="PS51842">
    <property type="entry name" value="IF_ROD_2"/>
    <property type="match status" value="1"/>
</dbReference>
<sequence>MTTRSVSSSSYRRMFGGPGTASRPSSSRSYVTTSTRTYSLGSALRPSTSRSLYASSPGGVYATRSSAVRLRSSVPGVRLLQDSVDFSLADAINTEFKNTRTNEKVELQELNDRFANYIDKVRFLEQQNKILLAELEQLKGQGKSRLGDLYEEEMRELRRQVDQLTNDKARVEVERDNLTEDIMRLREKLQEEMLQREEAENTLQSFRQDVDNASLARLDLERKVESLQEEIAFLKKLHEEEIQELQAQIQEQHVQIDVDVSKPDLTAALRDVRQQYESVAAKNLQEAEEWYKSKFADLSEAANRNNDALRQAKQESNEYRRQVQSLTCEVDALKGTNESLERQMREMEENFAVEAANYQDTIGRLQDEIQNMKEEMARHLREYQDLLNVKMALDIEIATYRKLLEGEESRISLPLPNFSSLNLRETNLDSLPLVDTHSKRTLLIKTVETRDGQVINETSQHHDDLE</sequence>
<evidence type="ECO:0000250" key="1"/>
<evidence type="ECO:0000250" key="2">
    <source>
        <dbReference type="UniProtKB" id="A0A8C0N8E3"/>
    </source>
</evidence>
<evidence type="ECO:0000250" key="3">
    <source>
        <dbReference type="UniProtKB" id="P08670"/>
    </source>
</evidence>
<evidence type="ECO:0000250" key="4">
    <source>
        <dbReference type="UniProtKB" id="P20152"/>
    </source>
</evidence>
<evidence type="ECO:0000250" key="5">
    <source>
        <dbReference type="UniProtKB" id="P31000"/>
    </source>
</evidence>
<evidence type="ECO:0000250" key="6">
    <source>
        <dbReference type="UniProtKB" id="P84198"/>
    </source>
</evidence>
<evidence type="ECO:0000255" key="7">
    <source>
        <dbReference type="PROSITE-ProRule" id="PRU01188"/>
    </source>
</evidence>
<evidence type="ECO:0000256" key="8">
    <source>
        <dbReference type="SAM" id="MobiDB-lite"/>
    </source>
</evidence>
<accession>Q4R4X4</accession>
<proteinExistence type="evidence at transcript level"/>
<keyword id="KW-0007">Acetylation</keyword>
<keyword id="KW-1003">Cell membrane</keyword>
<keyword id="KW-0175">Coiled coil</keyword>
<keyword id="KW-0963">Cytoplasm</keyword>
<keyword id="KW-0206">Cytoskeleton</keyword>
<keyword id="KW-0325">Glycoprotein</keyword>
<keyword id="KW-0403">Intermediate filament</keyword>
<keyword id="KW-1017">Isopeptide bond</keyword>
<keyword id="KW-0472">Membrane</keyword>
<keyword id="KW-0539">Nucleus</keyword>
<keyword id="KW-0597">Phosphoprotein</keyword>
<keyword id="KW-1185">Reference proteome</keyword>
<keyword id="KW-0702">S-nitrosylation</keyword>
<keyword id="KW-0832">Ubl conjugation</keyword>
<gene>
    <name type="primary">VIM</name>
    <name type="ORF">QtrA-12155</name>
</gene>
<organism>
    <name type="scientific">Macaca fascicularis</name>
    <name type="common">Crab-eating macaque</name>
    <name type="synonym">Cynomolgus monkey</name>
    <dbReference type="NCBI Taxonomy" id="9541"/>
    <lineage>
        <taxon>Eukaryota</taxon>
        <taxon>Metazoa</taxon>
        <taxon>Chordata</taxon>
        <taxon>Craniata</taxon>
        <taxon>Vertebrata</taxon>
        <taxon>Euteleostomi</taxon>
        <taxon>Mammalia</taxon>
        <taxon>Eutheria</taxon>
        <taxon>Euarchontoglires</taxon>
        <taxon>Primates</taxon>
        <taxon>Haplorrhini</taxon>
        <taxon>Catarrhini</taxon>
        <taxon>Cercopithecidae</taxon>
        <taxon>Cercopithecinae</taxon>
        <taxon>Macaca</taxon>
    </lineage>
</organism>
<name>VIME_MACFA</name>
<feature type="chain" id="PRO_0000236050" description="Vimentin">
    <location>
        <begin position="1"/>
        <end position="466"/>
    </location>
</feature>
<feature type="domain" description="IF rod" evidence="7">
    <location>
        <begin position="103"/>
        <end position="411"/>
    </location>
</feature>
<feature type="region of interest" description="Head">
    <location>
        <begin position="1"/>
        <end position="95"/>
    </location>
</feature>
<feature type="region of interest" description="Disordered" evidence="8">
    <location>
        <begin position="1"/>
        <end position="30"/>
    </location>
</feature>
<feature type="region of interest" description="Coil 1A">
    <location>
        <begin position="96"/>
        <end position="131"/>
    </location>
</feature>
<feature type="region of interest" description="Linker 1">
    <location>
        <begin position="132"/>
        <end position="153"/>
    </location>
</feature>
<feature type="region of interest" description="Coil 1B">
    <location>
        <begin position="154"/>
        <end position="245"/>
    </location>
</feature>
<feature type="region of interest" description="Linker 12">
    <location>
        <begin position="246"/>
        <end position="268"/>
    </location>
</feature>
<feature type="region of interest" description="Coil 2">
    <location>
        <begin position="269"/>
        <end position="407"/>
    </location>
</feature>
<feature type="region of interest" description="Tail">
    <location>
        <begin position="408"/>
        <end position="466"/>
    </location>
</feature>
<feature type="coiled-coil region">
    <location>
        <begin position="96"/>
        <end position="131"/>
    </location>
</feature>
<feature type="coiled-coil region">
    <location>
        <begin position="154"/>
        <end position="245"/>
    </location>
</feature>
<feature type="coiled-coil region">
    <location>
        <begin position="303"/>
        <end position="407"/>
    </location>
</feature>
<feature type="short sequence motif" description="[IL]-x-C-x-x-[DE] motif" evidence="3">
    <location>
        <begin position="326"/>
        <end position="329"/>
    </location>
</feature>
<feature type="compositionally biased region" description="Low complexity" evidence="8">
    <location>
        <begin position="1"/>
        <end position="13"/>
    </location>
</feature>
<feature type="compositionally biased region" description="Low complexity" evidence="8">
    <location>
        <begin position="20"/>
        <end position="30"/>
    </location>
</feature>
<feature type="site" description="Stutter" evidence="1">
    <location>
        <position position="351"/>
    </location>
</feature>
<feature type="modified residue" description="Phosphoserine" evidence="3">
    <location>
        <position position="5"/>
    </location>
</feature>
<feature type="modified residue" description="Phosphoserine; alternate" evidence="3">
    <location>
        <position position="7"/>
    </location>
</feature>
<feature type="modified residue" description="Phosphoserine" evidence="3">
    <location>
        <position position="8"/>
    </location>
</feature>
<feature type="modified residue" description="Phosphoserine" evidence="3">
    <location>
        <position position="9"/>
    </location>
</feature>
<feature type="modified residue" description="Phosphoserine" evidence="3">
    <location>
        <position position="10"/>
    </location>
</feature>
<feature type="modified residue" description="Phosphothreonine" evidence="3">
    <location>
        <position position="20"/>
    </location>
</feature>
<feature type="modified residue" description="Phosphoserine" evidence="4">
    <location>
        <position position="25"/>
    </location>
</feature>
<feature type="modified residue" description="Phosphoserine" evidence="4">
    <location>
        <position position="26"/>
    </location>
</feature>
<feature type="modified residue" description="Phosphoserine; by PKC; alternate" evidence="3">
    <location>
        <position position="34"/>
    </location>
</feature>
<feature type="modified residue" description="Phosphoserine; by CaMK2, PKA, PKC and ROCK2" evidence="3">
    <location>
        <position position="39"/>
    </location>
</feature>
<feature type="modified residue" description="Phosphoserine" evidence="3">
    <location>
        <position position="42"/>
    </location>
</feature>
<feature type="modified residue" description="Phosphoserine" evidence="4">
    <location>
        <position position="47"/>
    </location>
</feature>
<feature type="modified residue" description="Phosphoserine" evidence="3">
    <location>
        <position position="49"/>
    </location>
</feature>
<feature type="modified residue" description="Phosphoserine" evidence="4">
    <location>
        <position position="51"/>
    </location>
</feature>
<feature type="modified residue" description="Phosphotyrosine" evidence="4">
    <location>
        <position position="53"/>
    </location>
</feature>
<feature type="modified residue" description="Phosphoserine" evidence="5">
    <location>
        <position position="55"/>
    </location>
</feature>
<feature type="modified residue" description="Phosphoserine; by CDK5 and CDK1" evidence="3">
    <location>
        <position position="56"/>
    </location>
</feature>
<feature type="modified residue" description="Phosphotyrosine" evidence="3">
    <location>
        <position position="61"/>
    </location>
</feature>
<feature type="modified residue" description="Phosphoserine" evidence="4">
    <location>
        <position position="66"/>
    </location>
</feature>
<feature type="modified residue" description="Phosphoserine; by AURKB and ROCK2" evidence="3">
    <location>
        <position position="72"/>
    </location>
</feature>
<feature type="modified residue" description="Phosphoserine" evidence="3">
    <location>
        <position position="73"/>
    </location>
</feature>
<feature type="modified residue" description="Phosphoserine" evidence="4">
    <location>
        <position position="83"/>
    </location>
</feature>
<feature type="modified residue" description="Phosphoserine" evidence="3">
    <location>
        <position position="87"/>
    </location>
</feature>
<feature type="modified residue" description="Phosphotyrosine" evidence="3">
    <location>
        <position position="117"/>
    </location>
</feature>
<feature type="modified residue" description="N6-acetyllysine; alternate" evidence="3">
    <location>
        <position position="120"/>
    </location>
</feature>
<feature type="modified residue" description="N6-succinyllysine; alternate" evidence="4">
    <location>
        <position position="120"/>
    </location>
</feature>
<feature type="modified residue" description="N6-acetyllysine; alternate" evidence="4">
    <location>
        <position position="129"/>
    </location>
</feature>
<feature type="modified residue" description="N6-succinyllysine; alternate" evidence="4">
    <location>
        <position position="129"/>
    </location>
</feature>
<feature type="modified residue" description="N6-acetyllysine; alternate" evidence="3">
    <location>
        <position position="139"/>
    </location>
</feature>
<feature type="modified residue" description="Phosphoserine" evidence="3">
    <location>
        <position position="144"/>
    </location>
</feature>
<feature type="modified residue" description="N6-acetyllysine" evidence="4">
    <location>
        <position position="168"/>
    </location>
</feature>
<feature type="modified residue" description="N6-acetyllysine; alternate" evidence="4">
    <location>
        <position position="188"/>
    </location>
</feature>
<feature type="modified residue" description="N6-succinyllysine; alternate" evidence="4">
    <location>
        <position position="188"/>
    </location>
</feature>
<feature type="modified residue" description="Phosphoserine" evidence="3">
    <location>
        <position position="214"/>
    </location>
</feature>
<feature type="modified residue" description="N6-acetyllysine; alternate" evidence="4">
    <location>
        <position position="223"/>
    </location>
</feature>
<feature type="modified residue" description="Phosphoserine" evidence="3">
    <location>
        <position position="226"/>
    </location>
</feature>
<feature type="modified residue" description="N6-acetyllysine" evidence="4">
    <location>
        <position position="235"/>
    </location>
</feature>
<feature type="modified residue" description="N6-acetyllysine; alternate" evidence="4">
    <location>
        <position position="294"/>
    </location>
</feature>
<feature type="modified residue" description="N6-succinyllysine; alternate" evidence="4">
    <location>
        <position position="294"/>
    </location>
</feature>
<feature type="modified residue" description="Phosphoserine" evidence="3">
    <location>
        <position position="299"/>
    </location>
</feature>
<feature type="modified residue" description="Phosphoserine" evidence="4">
    <location>
        <position position="325"/>
    </location>
</feature>
<feature type="modified residue" description="N6-acetyllysine; alternate" evidence="3">
    <location>
        <position position="373"/>
    </location>
</feature>
<feature type="modified residue" description="Phosphoserine" evidence="3">
    <location>
        <position position="409"/>
    </location>
</feature>
<feature type="modified residue" description="Phosphoserine" evidence="6">
    <location>
        <position position="412"/>
    </location>
</feature>
<feature type="modified residue" description="Phosphoserine" evidence="3">
    <location>
        <position position="419"/>
    </location>
</feature>
<feature type="modified residue" description="Phosphoserine" evidence="3">
    <location>
        <position position="420"/>
    </location>
</feature>
<feature type="modified residue" description="Phosphothreonine" evidence="3">
    <location>
        <position position="426"/>
    </location>
</feature>
<feature type="modified residue" description="Phosphoserine" evidence="3">
    <location>
        <position position="430"/>
    </location>
</feature>
<feature type="modified residue" description="Phosphothreonine" evidence="3">
    <location>
        <position position="436"/>
    </location>
</feature>
<feature type="modified residue" description="Phosphoserine" evidence="3">
    <location>
        <position position="438"/>
    </location>
</feature>
<feature type="modified residue" description="N6-acetyllysine; alternate" evidence="3">
    <location>
        <position position="445"/>
    </location>
</feature>
<feature type="modified residue" description="N6-succinyllysine; alternate" evidence="4">
    <location>
        <position position="445"/>
    </location>
</feature>
<feature type="modified residue" description="Phosphothreonine" evidence="3">
    <location>
        <position position="446"/>
    </location>
</feature>
<feature type="modified residue" description="Phosphothreonine" evidence="3">
    <location>
        <position position="458"/>
    </location>
</feature>
<feature type="modified residue" description="Phosphoserine" evidence="3">
    <location>
        <position position="459"/>
    </location>
</feature>
<feature type="glycosylation site" description="O-linked (GlcNAc) serine; alternate" evidence="1">
    <location>
        <position position="7"/>
    </location>
</feature>
<feature type="glycosylation site" description="O-linked (GlcNAc) threonine" evidence="1">
    <location>
        <position position="33"/>
    </location>
</feature>
<feature type="glycosylation site" description="O-linked (GlcNAc) serine; alternate" evidence="1">
    <location>
        <position position="34"/>
    </location>
</feature>
<feature type="cross-link" description="Glycyl lysine isopeptide (Lys-Gly) (interchain with G-Cter in SUMO2)" evidence="3">
    <location>
        <position position="104"/>
    </location>
</feature>
<feature type="cross-link" description="Glycyl lysine isopeptide (Lys-Gly) (interchain with G-Cter in SUMO2); alternate" evidence="3">
    <location>
        <position position="120"/>
    </location>
</feature>
<feature type="cross-link" description="Glycyl lysine isopeptide (Lys-Gly) (interchain with G-Cter in SUMO2); alternate" evidence="3">
    <location>
        <position position="129"/>
    </location>
</feature>
<feature type="cross-link" description="Glycyl lysine isopeptide (Lys-Gly) (interchain with G-Cter in SUMO2); alternate" evidence="3">
    <location>
        <position position="139"/>
    </location>
</feature>
<feature type="cross-link" description="Glycyl lysine isopeptide (Lys-Gly) (interchain with G-Cter in SUMO2); alternate" evidence="3">
    <location>
        <position position="223"/>
    </location>
</feature>
<feature type="cross-link" description="Glycyl lysine isopeptide (Lys-Gly) (interchain with G-Cter in SUMO2)" evidence="3">
    <location>
        <position position="262"/>
    </location>
</feature>
<feature type="cross-link" description="Glycyl lysine isopeptide (Lys-Gly) (interchain with G-Cter in SUMO2); alternate" evidence="3">
    <location>
        <position position="294"/>
    </location>
</feature>
<feature type="cross-link" description="Glycyl lysine isopeptide (Lys-Gly) (interchain with G-Cter in SUMO2)" evidence="3">
    <location>
        <position position="313"/>
    </location>
</feature>
<feature type="cross-link" description="Glycyl lysine isopeptide (Lys-Gly) (interchain with G-Cter in SUMO2); alternate" evidence="3">
    <location>
        <position position="373"/>
    </location>
</feature>
<feature type="cross-link" description="Glycyl lysine isopeptide (Lys-Gly) (interchain with G-Cter in SUMO2)" evidence="3">
    <location>
        <position position="439"/>
    </location>
</feature>
<feature type="cross-link" description="Glycyl lysine isopeptide (Lys-Gly) (interchain with G-Cter in SUMO1); alternate" evidence="3">
    <location>
        <position position="445"/>
    </location>
</feature>
<feature type="cross-link" description="Glycyl lysine isopeptide (Lys-Gly) (interchain with G-Cter in SUMO2); alternate" evidence="3">
    <location>
        <position position="445"/>
    </location>
</feature>
<protein>
    <recommendedName>
        <fullName>Vimentin</fullName>
    </recommendedName>
</protein>
<reference key="1">
    <citation type="submission" date="2005-06" db="EMBL/GenBank/DDBJ databases">
        <title>DNA sequences of macaque genes expressed in brain or testis and its evolutionary implications.</title>
        <authorList>
            <consortium name="International consortium for macaque cDNA sequencing and analysis"/>
        </authorList>
    </citation>
    <scope>NUCLEOTIDE SEQUENCE [LARGE SCALE MRNA]</scope>
    <source>
        <tissue>Temporal cortex</tissue>
    </source>
</reference>
<comment type="function">
    <text evidence="2 5">Vimentins are class-III intermediate filaments found in various non-epithelial cells, especially mesenchymal cells. Vimentin is attached to the nucleus, endoplasmic reticulum, and mitochondria, either laterally or terminally. Plays a role in cell directional movement, orientation, cell sheet organization and Golgi complex polarization at the cell migration front (By similarity). Protects SCRIB from proteasomal degradation and facilitates its localization to intermediate filaments in a cell contact-mediated manner (By similarity).</text>
</comment>
<comment type="function">
    <text evidence="3">Involved with LARP6 in the stabilization of type I collagen mRNAs for CO1A1 and CO1A2.</text>
</comment>
<comment type="subunit">
    <text evidence="3 4 5">Homomer assembled from elementary dimers (By similarity). Identified in complexes that contain VIM, EZR, AHNAK, BFSP1, BFSP2, ANK2, PLEC, PRX and spectrin (By similarity). Interacts with BCAS3 (By similarity). Interacts with LGSN (By similarity). Interacts with SYNM (By similarity). Interacts (via rod region) with PLEC (via CH 1 domain) (By similarity). Interacts with STK33 (By similarity). Interacts with LARP6 (By similarity). Interacts with RAB8B (By similarity). Interacts with TOR1A; the interaction associates TOR1A with the cytoskeleton. Interacts with TOR1AIP1 (By similarity). Interacts with TOR1AIP1 (By similarity). Interacts with DIAPH1 (By similarity). Interacts with EPPK1; interaction is dependent of higher-order structure of intermediate filament (By similarity). Interacts with the non-receptor tyrosine kinase SRMS; the interaction leads to phosphorylation of VIM (By similarity). Interacts with NOD2 (By similarity). Interacts (via head region) with CORO1C (By similarity). Interacts with HDGF (By similarity). Interacts with PRKCE (via phorbol-ester/DAG-type 2 domain) (By similarity). Interacts with BFSP2 (By similarity). Interacts with PPL (By similarity). Interacts with PKP1 and PKP2 (By similarity). Interacts with SCRIB (via PDZ domains); the interaction protects SCRIB from proteasomal degradation and facilitates SCRIB localization to intermediate filaments, the interaction is reduced by cell contact inhibition (By similarity).</text>
</comment>
<comment type="subcellular location">
    <subcellularLocation>
        <location evidence="3">Cytoplasm</location>
    </subcellularLocation>
    <subcellularLocation>
        <location evidence="3">Cytoplasm</location>
        <location evidence="3">Cytoskeleton</location>
    </subcellularLocation>
    <subcellularLocation>
        <location evidence="5">Nucleus matrix</location>
    </subcellularLocation>
    <subcellularLocation>
        <location evidence="4">Cell membrane</location>
    </subcellularLocation>
</comment>
<comment type="domain">
    <text evidence="3">The central alpha-helical coiled-coil IF rod domain mediates elementary homodimerization.</text>
</comment>
<comment type="domain">
    <text evidence="3">The [IL]-x-C-x-x-[DE] motif is a proposed target motif for cysteine S-nitrosylation mediated by the iNOS-S100A8/A9 transnitrosylase complex.</text>
</comment>
<comment type="PTM">
    <text evidence="3 5">One of the most prominent phosphoproteins in various cells of mesenchymal origin. Phosphorylation is enhanced during cell division, at which time vimentin filaments are significantly reorganized. Phosphorylation by PKN1 inhibits the formation of filaments. Filament disassembly during mitosis is promoted by phosphorylation at Ser-55 as well as by nestin. Phosphorylated at Ser-56 by CDK5 during neutrophil secretion in the cytoplasm. Phosphorylated by STK33. Phosphorylated on tyrosine residues by SRMS.</text>
</comment>
<comment type="PTM">
    <text evidence="3">S-nitrosylation is induced by interferon-gamma and oxidatively-modified low-densitity lipoprotein (LDL(ox)) possibly implicating the iNOS-S100A8/9 transnitrosylase complex.</text>
</comment>
<comment type="similarity">
    <text evidence="7">Belongs to the intermediate filament family.</text>
</comment>